<keyword id="KW-1185">Reference proteome</keyword>
<evidence type="ECO:0000250" key="1"/>
<feature type="chain" id="PRO_0000097111" description="Pneumococcal vaccine antigen A homolog">
    <location>
        <begin position="1"/>
        <end position="199"/>
    </location>
</feature>
<protein>
    <recommendedName>
        <fullName>Pneumococcal vaccine antigen A homolog</fullName>
    </recommendedName>
</protein>
<sequence>MFRLLKRACSFLLLFVIYQSFVIHHNVQRVLAYKPMVEKTLAENDTKANVDLVLAMIYTETKGGEADVMQSSESSSGQKNSITDSQASIEHGVNLLSHNLALAEEAGVDSWTAVQAYNFGTAYIDYIAEHGGQNTVDLATTYSKTVVAPSLGNTSGQTYFYYHPLALISGGKLYKNGGNIYYSREVHFNLYLIELMSLF</sequence>
<organism>
    <name type="scientific">Streptococcus pyogenes serotype M1</name>
    <dbReference type="NCBI Taxonomy" id="301447"/>
    <lineage>
        <taxon>Bacteria</taxon>
        <taxon>Bacillati</taxon>
        <taxon>Bacillota</taxon>
        <taxon>Bacilli</taxon>
        <taxon>Lactobacillales</taxon>
        <taxon>Streptococcaceae</taxon>
        <taxon>Streptococcus</taxon>
    </lineage>
</organism>
<accession>Q99ZN9</accession>
<accession>Q48YT5</accession>
<gene>
    <name type="primary">pvaA</name>
    <name type="ordered locus">SPy_1147</name>
    <name type="ordered locus">M5005_Spy0869</name>
</gene>
<reference key="1">
    <citation type="journal article" date="2001" name="Proc. Natl. Acad. Sci. U.S.A.">
        <title>Complete genome sequence of an M1 strain of Streptococcus pyogenes.</title>
        <authorList>
            <person name="Ferretti J.J."/>
            <person name="McShan W.M."/>
            <person name="Ajdic D.J."/>
            <person name="Savic D.J."/>
            <person name="Savic G."/>
            <person name="Lyon K."/>
            <person name="Primeaux C."/>
            <person name="Sezate S."/>
            <person name="Suvorov A.N."/>
            <person name="Kenton S."/>
            <person name="Lai H.S."/>
            <person name="Lin S.P."/>
            <person name="Qian Y."/>
            <person name="Jia H.G."/>
            <person name="Najar F.Z."/>
            <person name="Ren Q."/>
            <person name="Zhu H."/>
            <person name="Song L."/>
            <person name="White J."/>
            <person name="Yuan X."/>
            <person name="Clifton S.W."/>
            <person name="Roe B.A."/>
            <person name="McLaughlin R.E."/>
        </authorList>
    </citation>
    <scope>NUCLEOTIDE SEQUENCE [LARGE SCALE GENOMIC DNA]</scope>
    <source>
        <strain>ATCC 700294 / SF370 / Serotype M1</strain>
    </source>
</reference>
<reference key="2">
    <citation type="journal article" date="2005" name="J. Infect. Dis.">
        <title>Evolutionary origin and emergence of a highly successful clone of serotype M1 group A Streptococcus involved multiple horizontal gene transfer events.</title>
        <authorList>
            <person name="Sumby P."/>
            <person name="Porcella S.F."/>
            <person name="Madrigal A.G."/>
            <person name="Barbian K.D."/>
            <person name="Virtaneva K."/>
            <person name="Ricklefs S.M."/>
            <person name="Sturdevant D.E."/>
            <person name="Graham M.R."/>
            <person name="Vuopio-Varkila J."/>
            <person name="Hoe N.P."/>
            <person name="Musser J.M."/>
        </authorList>
    </citation>
    <scope>NUCLEOTIDE SEQUENCE [LARGE SCALE GENOMIC DNA]</scope>
    <source>
        <strain>ATCC BAA-947 / MGAS5005 / Serotype M1</strain>
    </source>
</reference>
<dbReference type="EMBL" id="AE004092">
    <property type="protein sequence ID" value="AAK34019.1"/>
    <property type="molecule type" value="Genomic_DNA"/>
</dbReference>
<dbReference type="EMBL" id="CP000017">
    <property type="protein sequence ID" value="AAZ51487.1"/>
    <property type="molecule type" value="Genomic_DNA"/>
</dbReference>
<dbReference type="RefSeq" id="NP_269298.1">
    <property type="nucleotide sequence ID" value="NC_002737.2"/>
</dbReference>
<dbReference type="SMR" id="Q99ZN9"/>
<dbReference type="PaxDb" id="1314-HKU360_00931"/>
<dbReference type="KEGG" id="spy:SPy_1147"/>
<dbReference type="KEGG" id="spz:M5005_Spy0869"/>
<dbReference type="PATRIC" id="fig|160490.10.peg.1000"/>
<dbReference type="HOGENOM" id="CLU_101375_3_0_9"/>
<dbReference type="OMA" id="EAGCDEW"/>
<dbReference type="Proteomes" id="UP000000750">
    <property type="component" value="Chromosome"/>
</dbReference>
<dbReference type="GO" id="GO:0009986">
    <property type="term" value="C:cell surface"/>
    <property type="evidence" value="ECO:0007669"/>
    <property type="project" value="UniProtKB-SubCell"/>
</dbReference>
<dbReference type="CDD" id="cd16891">
    <property type="entry name" value="CwlT-like"/>
    <property type="match status" value="1"/>
</dbReference>
<dbReference type="Gene3D" id="1.10.530.10">
    <property type="match status" value="1"/>
</dbReference>
<dbReference type="InterPro" id="IPR047194">
    <property type="entry name" value="CwlT-like_lysozyme"/>
</dbReference>
<dbReference type="InterPro" id="IPR023346">
    <property type="entry name" value="Lysozyme-like_dom_sf"/>
</dbReference>
<dbReference type="Pfam" id="PF13702">
    <property type="entry name" value="Lysozyme_like"/>
    <property type="match status" value="1"/>
</dbReference>
<dbReference type="SUPFAM" id="SSF53955">
    <property type="entry name" value="Lysozyme-like"/>
    <property type="match status" value="1"/>
</dbReference>
<proteinExistence type="inferred from homology"/>
<name>PVAA_STRP1</name>
<comment type="subcellular location">
    <subcellularLocation>
        <location evidence="1">Cell surface</location>
    </subcellularLocation>
</comment>